<evidence type="ECO:0000255" key="1"/>
<protein>
    <recommendedName>
        <fullName>Testis-expressed protein 35</fullName>
    </recommendedName>
</protein>
<dbReference type="EMBL" id="BC110123">
    <property type="protein sequence ID" value="AAI10124.1"/>
    <property type="molecule type" value="mRNA"/>
</dbReference>
<dbReference type="RefSeq" id="NP_001070591.1">
    <property type="nucleotide sequence ID" value="NM_001077123.2"/>
</dbReference>
<dbReference type="SMR" id="Q2YDP6"/>
<dbReference type="FunCoup" id="Q2YDP6">
    <property type="interactions" value="54"/>
</dbReference>
<dbReference type="STRING" id="9913.ENSBTAP00000006500"/>
<dbReference type="PaxDb" id="9913-ENSBTAP00000006500"/>
<dbReference type="GeneID" id="768066"/>
<dbReference type="KEGG" id="bta:768066"/>
<dbReference type="CTD" id="84066"/>
<dbReference type="eggNOG" id="ENOG502RVNR">
    <property type="taxonomic scope" value="Eukaryota"/>
</dbReference>
<dbReference type="InParanoid" id="Q2YDP6"/>
<dbReference type="OrthoDB" id="9837524at2759"/>
<dbReference type="Proteomes" id="UP000009136">
    <property type="component" value="Unplaced"/>
</dbReference>
<dbReference type="GO" id="GO:0005634">
    <property type="term" value="C:nucleus"/>
    <property type="evidence" value="ECO:0000250"/>
    <property type="project" value="UniProtKB"/>
</dbReference>
<dbReference type="InterPro" id="IPR027874">
    <property type="entry name" value="Tex35"/>
</dbReference>
<dbReference type="PANTHER" id="PTHR36860">
    <property type="entry name" value="TESTIS-EXPRESSED PROTEIN 35"/>
    <property type="match status" value="1"/>
</dbReference>
<dbReference type="PANTHER" id="PTHR36860:SF1">
    <property type="entry name" value="TESTIS-EXPRESSED PROTEIN 35"/>
    <property type="match status" value="1"/>
</dbReference>
<dbReference type="Pfam" id="PF15079">
    <property type="entry name" value="Tsc35"/>
    <property type="match status" value="1"/>
</dbReference>
<accession>Q2YDP6</accession>
<proteinExistence type="evidence at transcript level"/>
<name>TEX35_BOVIN</name>
<sequence>MSAKRVEPKKTSLSKNYRAVCLELKPEPIKTYDYKGAKQEGPFTKPGGTKELKNELREVREEMKEKMEEIKQIKDVMDKDFDKLQEFVEIMKEMQKDMDEKMDVLINIQKNSKFPLRRGLKMQQELRLIGKTDTEPQLRLRKMDGAGGAPLSLHKKMVERQQPKDPMDPLHQCDSCFEKCLLCTPQNNYDRGKLPYHAWASFSPLASGPAF</sequence>
<feature type="chain" id="PRO_0000251186" description="Testis-expressed protein 35">
    <location>
        <begin position="1"/>
        <end position="211"/>
    </location>
</feature>
<feature type="coiled-coil region" evidence="1">
    <location>
        <begin position="47"/>
        <end position="111"/>
    </location>
</feature>
<gene>
    <name type="primary">Tex35</name>
</gene>
<reference key="1">
    <citation type="submission" date="2005-11" db="EMBL/GenBank/DDBJ databases">
        <authorList>
            <consortium name="NIH - Mammalian Gene Collection (MGC) project"/>
        </authorList>
    </citation>
    <scope>NUCLEOTIDE SEQUENCE [LARGE SCALE MRNA]</scope>
    <source>
        <strain>Crossbred X Angus</strain>
        <tissue>Liver</tissue>
    </source>
</reference>
<organism>
    <name type="scientific">Bos taurus</name>
    <name type="common">Bovine</name>
    <dbReference type="NCBI Taxonomy" id="9913"/>
    <lineage>
        <taxon>Eukaryota</taxon>
        <taxon>Metazoa</taxon>
        <taxon>Chordata</taxon>
        <taxon>Craniata</taxon>
        <taxon>Vertebrata</taxon>
        <taxon>Euteleostomi</taxon>
        <taxon>Mammalia</taxon>
        <taxon>Eutheria</taxon>
        <taxon>Laurasiatheria</taxon>
        <taxon>Artiodactyla</taxon>
        <taxon>Ruminantia</taxon>
        <taxon>Pecora</taxon>
        <taxon>Bovidae</taxon>
        <taxon>Bovinae</taxon>
        <taxon>Bos</taxon>
    </lineage>
</organism>
<keyword id="KW-0175">Coiled coil</keyword>
<keyword id="KW-1185">Reference proteome</keyword>